<reference key="1">
    <citation type="journal article" date="1996" name="Mol. Biol. Evol.">
        <title>The complete mitochondrial DNA sequence of the greater Indian rhinoceros, Rhinoceros unicornis, and the Phylogenetic relationship among Carnivora, Perissodactyla, and Artiodactyla (+ Cetacea).</title>
        <authorList>
            <person name="Xu X."/>
            <person name="Janke A."/>
            <person name="Arnason U."/>
        </authorList>
    </citation>
    <scope>NUCLEOTIDE SEQUENCE [GENOMIC DNA]</scope>
    <source>
        <tissue>Kidney</tissue>
    </source>
</reference>
<evidence type="ECO:0000250" key="1"/>
<evidence type="ECO:0000250" key="2">
    <source>
        <dbReference type="UniProtKB" id="P00157"/>
    </source>
</evidence>
<evidence type="ECO:0000255" key="3">
    <source>
        <dbReference type="PROSITE-ProRule" id="PRU00967"/>
    </source>
</evidence>
<evidence type="ECO:0000255" key="4">
    <source>
        <dbReference type="PROSITE-ProRule" id="PRU00968"/>
    </source>
</evidence>
<feature type="chain" id="PRO_0000061504" description="Cytochrome b">
    <location>
        <begin position="1"/>
        <end position="379"/>
    </location>
</feature>
<feature type="transmembrane region" description="Helical" evidence="2">
    <location>
        <begin position="33"/>
        <end position="53"/>
    </location>
</feature>
<feature type="transmembrane region" description="Helical" evidence="2">
    <location>
        <begin position="77"/>
        <end position="98"/>
    </location>
</feature>
<feature type="transmembrane region" description="Helical" evidence="2">
    <location>
        <begin position="113"/>
        <end position="133"/>
    </location>
</feature>
<feature type="transmembrane region" description="Helical" evidence="2">
    <location>
        <begin position="178"/>
        <end position="198"/>
    </location>
</feature>
<feature type="transmembrane region" description="Helical" evidence="2">
    <location>
        <begin position="226"/>
        <end position="246"/>
    </location>
</feature>
<feature type="transmembrane region" description="Helical" evidence="2">
    <location>
        <begin position="288"/>
        <end position="308"/>
    </location>
</feature>
<feature type="transmembrane region" description="Helical" evidence="2">
    <location>
        <begin position="320"/>
        <end position="340"/>
    </location>
</feature>
<feature type="transmembrane region" description="Helical" evidence="2">
    <location>
        <begin position="347"/>
        <end position="367"/>
    </location>
</feature>
<feature type="binding site" description="axial binding residue" evidence="2">
    <location>
        <position position="83"/>
    </location>
    <ligand>
        <name>heme b</name>
        <dbReference type="ChEBI" id="CHEBI:60344"/>
        <label>b562</label>
    </ligand>
    <ligandPart>
        <name>Fe</name>
        <dbReference type="ChEBI" id="CHEBI:18248"/>
    </ligandPart>
</feature>
<feature type="binding site" description="axial binding residue" evidence="2">
    <location>
        <position position="97"/>
    </location>
    <ligand>
        <name>heme b</name>
        <dbReference type="ChEBI" id="CHEBI:60344"/>
        <label>b566</label>
    </ligand>
    <ligandPart>
        <name>Fe</name>
        <dbReference type="ChEBI" id="CHEBI:18248"/>
    </ligandPart>
</feature>
<feature type="binding site" description="axial binding residue" evidence="2">
    <location>
        <position position="182"/>
    </location>
    <ligand>
        <name>heme b</name>
        <dbReference type="ChEBI" id="CHEBI:60344"/>
        <label>b562</label>
    </ligand>
    <ligandPart>
        <name>Fe</name>
        <dbReference type="ChEBI" id="CHEBI:18248"/>
    </ligandPart>
</feature>
<feature type="binding site" description="axial binding residue" evidence="2">
    <location>
        <position position="196"/>
    </location>
    <ligand>
        <name>heme b</name>
        <dbReference type="ChEBI" id="CHEBI:60344"/>
        <label>b566</label>
    </ligand>
    <ligandPart>
        <name>Fe</name>
        <dbReference type="ChEBI" id="CHEBI:18248"/>
    </ligandPart>
</feature>
<feature type="binding site" evidence="2">
    <location>
        <position position="201"/>
    </location>
    <ligand>
        <name>a ubiquinone</name>
        <dbReference type="ChEBI" id="CHEBI:16389"/>
    </ligand>
</feature>
<sequence>MTNIRKSHPLVKIINHSFIDLPTPSNISSWWNFGSLLGICLILQILTGLFLAMHYTPDTTTAFSSVTHICRDVNYGWMIRYLHANGASMFFICLFIHVGRGLYYGSYTFLETWNIGIILLFTLMATAFMGYVLPWGQMSFWGATVITNLLSAIPYIGTNLVEWIWGGFSVDKATLTRFFAFHFILPFIILALAITHLLFLHETGSNNPSGIPSNMDKIPFHPYYTIKDILGALLLILVLLILVLFFPDILGDPDNYTPANPLSTPPHIKPEWYFLFAYAILRSIPNKLGGVLALAFSILILLLIPYLHTSKQRSMMFRPLSQCMFWLLVADLLTLTWIGGQPVEHPFIIIGQLASILYFSLILVLMPLAGIIENNLLKW</sequence>
<keyword id="KW-0249">Electron transport</keyword>
<keyword id="KW-0349">Heme</keyword>
<keyword id="KW-0408">Iron</keyword>
<keyword id="KW-0472">Membrane</keyword>
<keyword id="KW-0479">Metal-binding</keyword>
<keyword id="KW-0496">Mitochondrion</keyword>
<keyword id="KW-0999">Mitochondrion inner membrane</keyword>
<keyword id="KW-0679">Respiratory chain</keyword>
<keyword id="KW-0812">Transmembrane</keyword>
<keyword id="KW-1133">Transmembrane helix</keyword>
<keyword id="KW-0813">Transport</keyword>
<keyword id="KW-0830">Ubiquinone</keyword>
<organism>
    <name type="scientific">Rhinoceros unicornis</name>
    <name type="common">Greater Indian rhinoceros</name>
    <dbReference type="NCBI Taxonomy" id="9809"/>
    <lineage>
        <taxon>Eukaryota</taxon>
        <taxon>Metazoa</taxon>
        <taxon>Chordata</taxon>
        <taxon>Craniata</taxon>
        <taxon>Vertebrata</taxon>
        <taxon>Euteleostomi</taxon>
        <taxon>Mammalia</taxon>
        <taxon>Eutheria</taxon>
        <taxon>Laurasiatheria</taxon>
        <taxon>Perissodactyla</taxon>
        <taxon>Rhinocerotidae</taxon>
        <taxon>Rhinoceros</taxon>
    </lineage>
</organism>
<accession>Q96071</accession>
<gene>
    <name type="primary">MT-CYB</name>
    <name type="synonym">COB</name>
    <name type="synonym">CYTB</name>
    <name type="synonym">MTCYB</name>
</gene>
<name>CYB_RHIUN</name>
<dbReference type="EMBL" id="X97336">
    <property type="protein sequence ID" value="CAA66013.1"/>
    <property type="molecule type" value="Genomic_DNA"/>
</dbReference>
<dbReference type="PIR" id="T11259">
    <property type="entry name" value="T11259"/>
</dbReference>
<dbReference type="RefSeq" id="NP_007380.1">
    <property type="nucleotide sequence ID" value="NC_001779.1"/>
</dbReference>
<dbReference type="SMR" id="Q96071"/>
<dbReference type="GeneID" id="808048"/>
<dbReference type="CTD" id="4519"/>
<dbReference type="GO" id="GO:0005743">
    <property type="term" value="C:mitochondrial inner membrane"/>
    <property type="evidence" value="ECO:0007669"/>
    <property type="project" value="UniProtKB-SubCell"/>
</dbReference>
<dbReference type="GO" id="GO:0045275">
    <property type="term" value="C:respiratory chain complex III"/>
    <property type="evidence" value="ECO:0007669"/>
    <property type="project" value="InterPro"/>
</dbReference>
<dbReference type="GO" id="GO:0046872">
    <property type="term" value="F:metal ion binding"/>
    <property type="evidence" value="ECO:0007669"/>
    <property type="project" value="UniProtKB-KW"/>
</dbReference>
<dbReference type="GO" id="GO:0008121">
    <property type="term" value="F:ubiquinol-cytochrome-c reductase activity"/>
    <property type="evidence" value="ECO:0007669"/>
    <property type="project" value="InterPro"/>
</dbReference>
<dbReference type="GO" id="GO:0006122">
    <property type="term" value="P:mitochondrial electron transport, ubiquinol to cytochrome c"/>
    <property type="evidence" value="ECO:0007669"/>
    <property type="project" value="TreeGrafter"/>
</dbReference>
<dbReference type="CDD" id="cd00290">
    <property type="entry name" value="cytochrome_b_C"/>
    <property type="match status" value="1"/>
</dbReference>
<dbReference type="CDD" id="cd00284">
    <property type="entry name" value="Cytochrome_b_N"/>
    <property type="match status" value="1"/>
</dbReference>
<dbReference type="FunFam" id="1.20.810.10:FF:000002">
    <property type="entry name" value="Cytochrome b"/>
    <property type="match status" value="1"/>
</dbReference>
<dbReference type="Gene3D" id="1.20.810.10">
    <property type="entry name" value="Cytochrome Bc1 Complex, Chain C"/>
    <property type="match status" value="1"/>
</dbReference>
<dbReference type="InterPro" id="IPR005798">
    <property type="entry name" value="Cyt_b/b6_C"/>
</dbReference>
<dbReference type="InterPro" id="IPR036150">
    <property type="entry name" value="Cyt_b/b6_C_sf"/>
</dbReference>
<dbReference type="InterPro" id="IPR005797">
    <property type="entry name" value="Cyt_b/b6_N"/>
</dbReference>
<dbReference type="InterPro" id="IPR027387">
    <property type="entry name" value="Cytb/b6-like_sf"/>
</dbReference>
<dbReference type="InterPro" id="IPR030689">
    <property type="entry name" value="Cytochrome_b"/>
</dbReference>
<dbReference type="InterPro" id="IPR048260">
    <property type="entry name" value="Cytochrome_b_C_euk/bac"/>
</dbReference>
<dbReference type="InterPro" id="IPR048259">
    <property type="entry name" value="Cytochrome_b_N_euk/bac"/>
</dbReference>
<dbReference type="InterPro" id="IPR016174">
    <property type="entry name" value="Di-haem_cyt_TM"/>
</dbReference>
<dbReference type="PANTHER" id="PTHR19271">
    <property type="entry name" value="CYTOCHROME B"/>
    <property type="match status" value="1"/>
</dbReference>
<dbReference type="PANTHER" id="PTHR19271:SF16">
    <property type="entry name" value="CYTOCHROME B"/>
    <property type="match status" value="1"/>
</dbReference>
<dbReference type="Pfam" id="PF00032">
    <property type="entry name" value="Cytochrom_B_C"/>
    <property type="match status" value="1"/>
</dbReference>
<dbReference type="Pfam" id="PF00033">
    <property type="entry name" value="Cytochrome_B"/>
    <property type="match status" value="1"/>
</dbReference>
<dbReference type="PIRSF" id="PIRSF038885">
    <property type="entry name" value="COB"/>
    <property type="match status" value="1"/>
</dbReference>
<dbReference type="SUPFAM" id="SSF81648">
    <property type="entry name" value="a domain/subunit of cytochrome bc1 complex (Ubiquinol-cytochrome c reductase)"/>
    <property type="match status" value="1"/>
</dbReference>
<dbReference type="SUPFAM" id="SSF81342">
    <property type="entry name" value="Transmembrane di-heme cytochromes"/>
    <property type="match status" value="1"/>
</dbReference>
<dbReference type="PROSITE" id="PS51003">
    <property type="entry name" value="CYTB_CTER"/>
    <property type="match status" value="1"/>
</dbReference>
<dbReference type="PROSITE" id="PS51002">
    <property type="entry name" value="CYTB_NTER"/>
    <property type="match status" value="1"/>
</dbReference>
<protein>
    <recommendedName>
        <fullName>Cytochrome b</fullName>
    </recommendedName>
    <alternativeName>
        <fullName>Complex III subunit 3</fullName>
    </alternativeName>
    <alternativeName>
        <fullName>Complex III subunit III</fullName>
    </alternativeName>
    <alternativeName>
        <fullName>Cytochrome b-c1 complex subunit 3</fullName>
    </alternativeName>
    <alternativeName>
        <fullName>Ubiquinol-cytochrome-c reductase complex cytochrome b subunit</fullName>
    </alternativeName>
</protein>
<proteinExistence type="inferred from homology"/>
<comment type="function">
    <text evidence="2">Component of the ubiquinol-cytochrome c reductase complex (complex III or cytochrome b-c1 complex) that is part of the mitochondrial respiratory chain. The b-c1 complex mediates electron transfer from ubiquinol to cytochrome c. Contributes to the generation of a proton gradient across the mitochondrial membrane that is then used for ATP synthesis.</text>
</comment>
<comment type="cofactor">
    <cofactor evidence="2">
        <name>heme b</name>
        <dbReference type="ChEBI" id="CHEBI:60344"/>
    </cofactor>
    <text evidence="2">Binds 2 heme b groups non-covalently.</text>
</comment>
<comment type="subunit">
    <text evidence="2">The cytochrome bc1 complex contains 11 subunits: 3 respiratory subunits (MT-CYB, CYC1 and UQCRFS1), 2 core proteins (UQCRC1 and UQCRC2) and 6 low-molecular weight proteins (UQCRH/QCR6, UQCRB/QCR7, UQCRQ/QCR8, UQCR10/QCR9, UQCR11/QCR10 and a cleavage product of UQCRFS1). This cytochrome bc1 complex then forms a dimer.</text>
</comment>
<comment type="subcellular location">
    <subcellularLocation>
        <location evidence="2">Mitochondrion inner membrane</location>
        <topology evidence="2">Multi-pass membrane protein</topology>
    </subcellularLocation>
</comment>
<comment type="miscellaneous">
    <text evidence="1">Heme 1 (or BL or b562) is low-potential and absorbs at about 562 nm, and heme 2 (or BH or b566) is high-potential and absorbs at about 566 nm.</text>
</comment>
<comment type="similarity">
    <text evidence="3 4">Belongs to the cytochrome b family.</text>
</comment>
<comment type="caution">
    <text evidence="2">The full-length protein contains only eight transmembrane helices, not nine as predicted by bioinformatics tools.</text>
</comment>
<geneLocation type="mitochondrion"/>